<organism>
    <name type="scientific">Arabidopsis thaliana</name>
    <name type="common">Mouse-ear cress</name>
    <dbReference type="NCBI Taxonomy" id="3702"/>
    <lineage>
        <taxon>Eukaryota</taxon>
        <taxon>Viridiplantae</taxon>
        <taxon>Streptophyta</taxon>
        <taxon>Embryophyta</taxon>
        <taxon>Tracheophyta</taxon>
        <taxon>Spermatophyta</taxon>
        <taxon>Magnoliopsida</taxon>
        <taxon>eudicotyledons</taxon>
        <taxon>Gunneridae</taxon>
        <taxon>Pentapetalae</taxon>
        <taxon>rosids</taxon>
        <taxon>malvids</taxon>
        <taxon>Brassicales</taxon>
        <taxon>Brassicaceae</taxon>
        <taxon>Camelineae</taxon>
        <taxon>Arabidopsis</taxon>
    </lineage>
</organism>
<gene>
    <name type="primary">PCNA2</name>
    <name type="ordered locus">At2g29570</name>
    <name type="ORF">F16P2.5</name>
</gene>
<comment type="function">
    <text evidence="1 4">This protein is an auxiliary protein of DNA polymerase delta and is involved in the control of eukaryotic DNA replication by increasing the polymerase's processibility during elongation of the leading strand (By similarity). May be involved in UV resistance.</text>
</comment>
<comment type="subunit">
    <text evidence="3 4 5">Homo- and heterotrimer. Interacts with POLH, ATXR5 and ATXR6.</text>
</comment>
<comment type="interaction">
    <interactant intactId="EBI-1810473">
        <id>Q9ZW35</id>
    </interactant>
    <interactant intactId="EBI-1810451">
        <id>Q8H2D5</id>
        <label>POLH</label>
    </interactant>
    <organismsDiffer>false</organismsDiffer>
    <experiments>2</experiments>
</comment>
<comment type="subcellular location">
    <subcellularLocation>
        <location>Nucleus</location>
    </subcellularLocation>
</comment>
<comment type="similarity">
    <text evidence="6">Belongs to the PCNA family.</text>
</comment>
<feature type="chain" id="PRO_0000149178" description="Proliferating cell nuclear antigen 2">
    <location>
        <begin position="1"/>
        <end position="264"/>
    </location>
</feature>
<feature type="DNA-binding region" evidence="2">
    <location>
        <begin position="61"/>
        <end position="80"/>
    </location>
</feature>
<feature type="strand" evidence="7">
    <location>
        <begin position="2"/>
        <end position="7"/>
    </location>
</feature>
<feature type="helix" evidence="7">
    <location>
        <begin position="9"/>
        <end position="22"/>
    </location>
</feature>
<feature type="strand" evidence="7">
    <location>
        <begin position="24"/>
        <end position="30"/>
    </location>
</feature>
<feature type="strand" evidence="7">
    <location>
        <begin position="32"/>
        <end position="40"/>
    </location>
</feature>
<feature type="strand" evidence="7">
    <location>
        <begin position="44"/>
        <end position="53"/>
    </location>
</feature>
<feature type="helix" evidence="7">
    <location>
        <begin position="54"/>
        <end position="56"/>
    </location>
</feature>
<feature type="strand" evidence="7">
    <location>
        <begin position="57"/>
        <end position="62"/>
    </location>
</feature>
<feature type="strand" evidence="7">
    <location>
        <begin position="66"/>
        <end position="71"/>
    </location>
</feature>
<feature type="helix" evidence="7">
    <location>
        <begin position="72"/>
        <end position="80"/>
    </location>
</feature>
<feature type="strand" evidence="7">
    <location>
        <begin position="87"/>
        <end position="92"/>
    </location>
</feature>
<feature type="strand" evidence="7">
    <location>
        <begin position="97"/>
        <end position="104"/>
    </location>
</feature>
<feature type="strand" evidence="7">
    <location>
        <begin position="108"/>
        <end position="117"/>
    </location>
</feature>
<feature type="strand" evidence="7">
    <location>
        <begin position="134"/>
        <end position="140"/>
    </location>
</feature>
<feature type="helix" evidence="7">
    <location>
        <begin position="141"/>
        <end position="151"/>
    </location>
</feature>
<feature type="turn" evidence="7">
    <location>
        <begin position="152"/>
        <end position="154"/>
    </location>
</feature>
<feature type="strand" evidence="7">
    <location>
        <begin position="156"/>
        <end position="163"/>
    </location>
</feature>
<feature type="strand" evidence="7">
    <location>
        <begin position="166"/>
        <end position="173"/>
    </location>
</feature>
<feature type="strand" evidence="7">
    <location>
        <begin position="176"/>
        <end position="182"/>
    </location>
</feature>
<feature type="helix" evidence="7">
    <location>
        <begin position="191"/>
        <end position="193"/>
    </location>
</feature>
<feature type="strand" evidence="7">
    <location>
        <begin position="196"/>
        <end position="201"/>
    </location>
</feature>
<feature type="strand" evidence="7">
    <location>
        <begin position="203"/>
        <end position="208"/>
    </location>
</feature>
<feature type="helix" evidence="7">
    <location>
        <begin position="209"/>
        <end position="215"/>
    </location>
</feature>
<feature type="helix" evidence="7">
    <location>
        <begin position="216"/>
        <end position="221"/>
    </location>
</feature>
<feature type="strand" evidence="7">
    <location>
        <begin position="223"/>
        <end position="229"/>
    </location>
</feature>
<feature type="strand" evidence="7">
    <location>
        <begin position="235"/>
        <end position="241"/>
    </location>
</feature>
<feature type="turn" evidence="7">
    <location>
        <begin position="242"/>
        <end position="244"/>
    </location>
</feature>
<feature type="strand" evidence="7">
    <location>
        <begin position="245"/>
        <end position="251"/>
    </location>
</feature>
<dbReference type="EMBL" id="EU072918">
    <property type="protein sequence ID" value="ABU25234.1"/>
    <property type="molecule type" value="mRNA"/>
</dbReference>
<dbReference type="EMBL" id="AC004561">
    <property type="protein sequence ID" value="AAC95182.1"/>
    <property type="molecule type" value="Genomic_DNA"/>
</dbReference>
<dbReference type="EMBL" id="CP002685">
    <property type="protein sequence ID" value="AEC08274.1"/>
    <property type="molecule type" value="Genomic_DNA"/>
</dbReference>
<dbReference type="EMBL" id="BT029466">
    <property type="protein sequence ID" value="ABK59695.1"/>
    <property type="molecule type" value="mRNA"/>
</dbReference>
<dbReference type="PIR" id="H84697">
    <property type="entry name" value="H84697"/>
</dbReference>
<dbReference type="RefSeq" id="NP_180517.1">
    <property type="nucleotide sequence ID" value="NM_128510.3"/>
</dbReference>
<dbReference type="PDB" id="2ZVW">
    <property type="method" value="X-ray"/>
    <property type="resolution" value="2.50 A"/>
    <property type="chains" value="A/B/C/D/E/F/G/H=1-255"/>
</dbReference>
<dbReference type="PDBsum" id="2ZVW"/>
<dbReference type="SMR" id="Q9ZW35"/>
<dbReference type="BioGRID" id="2856">
    <property type="interactions" value="36"/>
</dbReference>
<dbReference type="FunCoup" id="Q9ZW35">
    <property type="interactions" value="3764"/>
</dbReference>
<dbReference type="IntAct" id="Q9ZW35">
    <property type="interactions" value="3"/>
</dbReference>
<dbReference type="STRING" id="3702.Q9ZW35"/>
<dbReference type="PaxDb" id="3702-AT2G29570.1"/>
<dbReference type="ProteomicsDB" id="236847"/>
<dbReference type="EnsemblPlants" id="AT2G29570.1">
    <property type="protein sequence ID" value="AT2G29570.1"/>
    <property type="gene ID" value="AT2G29570"/>
</dbReference>
<dbReference type="GeneID" id="817506"/>
<dbReference type="Gramene" id="AT2G29570.1">
    <property type="protein sequence ID" value="AT2G29570.1"/>
    <property type="gene ID" value="AT2G29570"/>
</dbReference>
<dbReference type="KEGG" id="ath:AT2G29570"/>
<dbReference type="Araport" id="AT2G29570"/>
<dbReference type="TAIR" id="AT2G29570">
    <property type="gene designation" value="PCNA2"/>
</dbReference>
<dbReference type="eggNOG" id="KOG1636">
    <property type="taxonomic scope" value="Eukaryota"/>
</dbReference>
<dbReference type="HOGENOM" id="CLU_043978_3_0_1"/>
<dbReference type="InParanoid" id="Q9ZW35"/>
<dbReference type="OMA" id="AATKFKY"/>
<dbReference type="OrthoDB" id="534348at2759"/>
<dbReference type="PhylomeDB" id="Q9ZW35"/>
<dbReference type="CD-CODE" id="4299E36E">
    <property type="entry name" value="Nucleolus"/>
</dbReference>
<dbReference type="EvolutionaryTrace" id="Q9ZW35"/>
<dbReference type="PRO" id="PR:Q9ZW35"/>
<dbReference type="Proteomes" id="UP000006548">
    <property type="component" value="Chromosome 2"/>
</dbReference>
<dbReference type="ExpressionAtlas" id="Q9ZW35">
    <property type="expression patterns" value="baseline and differential"/>
</dbReference>
<dbReference type="GO" id="GO:0005634">
    <property type="term" value="C:nucleus"/>
    <property type="evidence" value="ECO:0007669"/>
    <property type="project" value="UniProtKB-SubCell"/>
</dbReference>
<dbReference type="GO" id="GO:0003677">
    <property type="term" value="F:DNA binding"/>
    <property type="evidence" value="ECO:0007669"/>
    <property type="project" value="UniProtKB-KW"/>
</dbReference>
<dbReference type="GO" id="GO:0030337">
    <property type="term" value="F:DNA polymerase processivity factor activity"/>
    <property type="evidence" value="ECO:0007669"/>
    <property type="project" value="InterPro"/>
</dbReference>
<dbReference type="GO" id="GO:0006260">
    <property type="term" value="P:DNA replication"/>
    <property type="evidence" value="ECO:0007669"/>
    <property type="project" value="UniProtKB-KW"/>
</dbReference>
<dbReference type="GO" id="GO:0042276">
    <property type="term" value="P:error-prone translesion synthesis"/>
    <property type="evidence" value="ECO:0000314"/>
    <property type="project" value="TAIR"/>
</dbReference>
<dbReference type="GO" id="GO:0006275">
    <property type="term" value="P:regulation of DNA replication"/>
    <property type="evidence" value="ECO:0007669"/>
    <property type="project" value="InterPro"/>
</dbReference>
<dbReference type="CDD" id="cd00577">
    <property type="entry name" value="PCNA"/>
    <property type="match status" value="1"/>
</dbReference>
<dbReference type="FunFam" id="3.70.10.10:FF:000001">
    <property type="entry name" value="Proliferating cell nuclear antigen"/>
    <property type="match status" value="1"/>
</dbReference>
<dbReference type="Gene3D" id="3.70.10.10">
    <property type="match status" value="1"/>
</dbReference>
<dbReference type="HAMAP" id="MF_00317">
    <property type="entry name" value="DNApol_clamp_arch"/>
    <property type="match status" value="1"/>
</dbReference>
<dbReference type="IDEAL" id="IID50110"/>
<dbReference type="InterPro" id="IPR046938">
    <property type="entry name" value="DNA_clamp_sf"/>
</dbReference>
<dbReference type="InterPro" id="IPR000730">
    <property type="entry name" value="Pr_cel_nuc_antig"/>
</dbReference>
<dbReference type="InterPro" id="IPR022649">
    <property type="entry name" value="Pr_cel_nuc_antig_C"/>
</dbReference>
<dbReference type="InterPro" id="IPR022659">
    <property type="entry name" value="Pr_cel_nuc_antig_CS"/>
</dbReference>
<dbReference type="InterPro" id="IPR022648">
    <property type="entry name" value="Pr_cel_nuc_antig_N"/>
</dbReference>
<dbReference type="NCBIfam" id="TIGR00590">
    <property type="entry name" value="pcna"/>
    <property type="match status" value="1"/>
</dbReference>
<dbReference type="PANTHER" id="PTHR11352">
    <property type="entry name" value="PROLIFERATING CELL NUCLEAR ANTIGEN"/>
    <property type="match status" value="1"/>
</dbReference>
<dbReference type="PANTHER" id="PTHR11352:SF0">
    <property type="entry name" value="PROLIFERATING CELL NUCLEAR ANTIGEN"/>
    <property type="match status" value="1"/>
</dbReference>
<dbReference type="Pfam" id="PF02747">
    <property type="entry name" value="PCNA_C"/>
    <property type="match status" value="1"/>
</dbReference>
<dbReference type="Pfam" id="PF00705">
    <property type="entry name" value="PCNA_N"/>
    <property type="match status" value="1"/>
</dbReference>
<dbReference type="PRINTS" id="PR00339">
    <property type="entry name" value="PCNACYCLIN"/>
</dbReference>
<dbReference type="SUPFAM" id="SSF55979">
    <property type="entry name" value="DNA clamp"/>
    <property type="match status" value="2"/>
</dbReference>
<dbReference type="PROSITE" id="PS01251">
    <property type="entry name" value="PCNA_1"/>
    <property type="match status" value="1"/>
</dbReference>
<dbReference type="PROSITE" id="PS00293">
    <property type="entry name" value="PCNA_2"/>
    <property type="match status" value="1"/>
</dbReference>
<keyword id="KW-0002">3D-structure</keyword>
<keyword id="KW-0235">DNA replication</keyword>
<keyword id="KW-0238">DNA-binding</keyword>
<keyword id="KW-0539">Nucleus</keyword>
<keyword id="KW-1185">Reference proteome</keyword>
<evidence type="ECO:0000250" key="1"/>
<evidence type="ECO:0000255" key="2"/>
<evidence type="ECO:0000269" key="3">
    <source>
    </source>
</evidence>
<evidence type="ECO:0000269" key="4">
    <source>
    </source>
</evidence>
<evidence type="ECO:0000269" key="5">
    <source>
    </source>
</evidence>
<evidence type="ECO:0000305" key="6"/>
<evidence type="ECO:0007829" key="7">
    <source>
        <dbReference type="PDB" id="2ZVW"/>
    </source>
</evidence>
<accession>Q9ZW35</accession>
<accession>A0JQ96</accession>
<protein>
    <recommendedName>
        <fullName>Proliferating cell nuclear antigen 2</fullName>
        <shortName>PCNA 2</shortName>
    </recommendedName>
</protein>
<reference key="1">
    <citation type="submission" date="2007-07" db="EMBL/GenBank/DDBJ databases">
        <authorList>
            <person name="Di Rubbo A."/>
            <person name="Vonarx E.J."/>
            <person name="Kunz B.A."/>
        </authorList>
    </citation>
    <scope>NUCLEOTIDE SEQUENCE [MRNA]</scope>
    <source>
        <strain>cv. Columbia</strain>
    </source>
</reference>
<reference key="2">
    <citation type="journal article" date="1999" name="Nature">
        <title>Sequence and analysis of chromosome 2 of the plant Arabidopsis thaliana.</title>
        <authorList>
            <person name="Lin X."/>
            <person name="Kaul S."/>
            <person name="Rounsley S.D."/>
            <person name="Shea T.P."/>
            <person name="Benito M.-I."/>
            <person name="Town C.D."/>
            <person name="Fujii C.Y."/>
            <person name="Mason T.M."/>
            <person name="Bowman C.L."/>
            <person name="Barnstead M.E."/>
            <person name="Feldblyum T.V."/>
            <person name="Buell C.R."/>
            <person name="Ketchum K.A."/>
            <person name="Lee J.J."/>
            <person name="Ronning C.M."/>
            <person name="Koo H.L."/>
            <person name="Moffat K.S."/>
            <person name="Cronin L.A."/>
            <person name="Shen M."/>
            <person name="Pai G."/>
            <person name="Van Aken S."/>
            <person name="Umayam L."/>
            <person name="Tallon L.J."/>
            <person name="Gill J.E."/>
            <person name="Adams M.D."/>
            <person name="Carrera A.J."/>
            <person name="Creasy T.H."/>
            <person name="Goodman H.M."/>
            <person name="Somerville C.R."/>
            <person name="Copenhaver G.P."/>
            <person name="Preuss D."/>
            <person name="Nierman W.C."/>
            <person name="White O."/>
            <person name="Eisen J.A."/>
            <person name="Salzberg S.L."/>
            <person name="Fraser C.M."/>
            <person name="Venter J.C."/>
        </authorList>
    </citation>
    <scope>NUCLEOTIDE SEQUENCE [LARGE SCALE GENOMIC DNA]</scope>
    <source>
        <strain>cv. Columbia</strain>
    </source>
</reference>
<reference key="3">
    <citation type="journal article" date="2017" name="Plant J.">
        <title>Araport11: a complete reannotation of the Arabidopsis thaliana reference genome.</title>
        <authorList>
            <person name="Cheng C.Y."/>
            <person name="Krishnakumar V."/>
            <person name="Chan A.P."/>
            <person name="Thibaud-Nissen F."/>
            <person name="Schobel S."/>
            <person name="Town C.D."/>
        </authorList>
    </citation>
    <scope>GENOME REANNOTATION</scope>
    <source>
        <strain>cv. Columbia</strain>
    </source>
</reference>
<reference key="4">
    <citation type="submission" date="2006-11" db="EMBL/GenBank/DDBJ databases">
        <title>Arabidopsis ORF clones.</title>
        <authorList>
            <person name="Bautista V.R."/>
            <person name="Kim C.J."/>
            <person name="Chen H."/>
            <person name="Quinitio C."/>
            <person name="Ecker J.R."/>
        </authorList>
    </citation>
    <scope>NUCLEOTIDE SEQUENCE [LARGE SCALE MRNA]</scope>
    <source>
        <strain>cv. Columbia</strain>
    </source>
</reference>
<reference key="5">
    <citation type="journal article" date="2006" name="Plant J.">
        <title>Two cell-cycle regulated SET-domain proteins interact with proliferating cell nuclear antigen (PCNA) in Arabidopsis.</title>
        <authorList>
            <person name="Raynaud C."/>
            <person name="Sozzani R."/>
            <person name="Glab N."/>
            <person name="Domenichini S."/>
            <person name="Perennes C."/>
            <person name="Cella R."/>
            <person name="Kondorosi E."/>
            <person name="Bergounioux C."/>
        </authorList>
    </citation>
    <scope>INTERACTION WITH ATXR5 AND ATXR6</scope>
</reference>
<reference key="6">
    <citation type="journal article" date="2008" name="Plant J.">
        <title>Arabidopsis thaliana Y-family DNA polymerase eta catalyses translesion synthesis and interacts functionally with PCNA2.</title>
        <authorList>
            <person name="Anderson H.J."/>
            <person name="Vonarx E.J."/>
            <person name="Pastushok L."/>
            <person name="Nakagawa M."/>
            <person name="Katafuchi A."/>
            <person name="Gruz P."/>
            <person name="Di Rubbo A."/>
            <person name="Grice D.M."/>
            <person name="Osmond M.J."/>
            <person name="Sakamoto A.N."/>
            <person name="Nohmi T."/>
            <person name="Xiao W."/>
            <person name="Kunz B.A."/>
        </authorList>
    </citation>
    <scope>FUNCTION IN UV RESISTANCE</scope>
    <scope>INTERACTION WITH POLH</scope>
</reference>
<reference key="7">
    <citation type="journal article" date="2009" name="Protein Sci.">
        <title>Crystal structures of the Arabidopsis thaliana proliferating cell nuclear antigen 1 and 2 proteins complexed with the human p21 C-terminal segment.</title>
        <authorList>
            <person name="Strzalka W."/>
            <person name="Oyama T."/>
            <person name="Tori K."/>
            <person name="Morikawa K."/>
        </authorList>
    </citation>
    <scope>X-RAY CRYSTALLOGRAPHY (2.50 ANGSTROMS) OF 1-256 IN COMPLEX WITH HUMAN P21 PEPTIDE</scope>
    <scope>SUBUNIT</scope>
</reference>
<name>PCNA2_ARATH</name>
<sequence length="264" mass="29222">MLELRLVQGSLLKKVLEAVKDLVNDANFDCSTTGFSLQAMDSSHVALVSLLLRSEGFEHYRCDRNLSMGMNLGNMSKMLKCAGNDDIITIKADDGSDTVTFMFESPTQDKIADFEMKLMDIDSEHLGIPDAEYHSIVRMPSGEFSRICKDLSSIGDTVVISVTKEGVKFSTAGDIGTANIVLRQNTTVDKPEDAIVIEMNEPVSLSFALRYMNSFTKATPLSETVTISLSSELPVVVEYKVAEMGYIRYYLAPKIEEEEDTKPE</sequence>
<proteinExistence type="evidence at protein level"/>